<reference evidence="5" key="1">
    <citation type="journal article" date="2010" name="PLoS ONE">
        <title>The complete genome sequence of Haloferax volcanii DS2, a model archaeon.</title>
        <authorList>
            <person name="Hartman A.L."/>
            <person name="Norais C."/>
            <person name="Badger J.H."/>
            <person name="Delmas S."/>
            <person name="Haldenby S."/>
            <person name="Madupu R."/>
            <person name="Robinson J."/>
            <person name="Khouri H."/>
            <person name="Ren Q."/>
            <person name="Lowe T.M."/>
            <person name="Maupin-Furlow J."/>
            <person name="Pohlschroder M."/>
            <person name="Daniels C."/>
            <person name="Pfeiffer F."/>
            <person name="Allers T."/>
            <person name="Eisen J.A."/>
        </authorList>
    </citation>
    <scope>NUCLEOTIDE SEQUENCE [LARGE SCALE GENOMIC DNA]</scope>
    <source>
        <strain evidence="7">ATCC 29605 / DSM 3757 / JCM 8879 / NBRC 14742 / NCIMB 2012 / VKM B-1768 / DS2</strain>
    </source>
</reference>
<reference evidence="6" key="2">
    <citation type="journal article" date="2014" name="PLoS Genet.">
        <title>Phylogenetically driven sequencing of extremely halophilic archaea reveals strategies for static and dynamic osmo-response.</title>
        <authorList>
            <person name="Becker E.A."/>
            <person name="Seitzer P.M."/>
            <person name="Tritt A."/>
            <person name="Larsen D."/>
            <person name="Krusor M."/>
            <person name="Yao A.I."/>
            <person name="Wu D."/>
            <person name="Madern D."/>
            <person name="Eisen J.A."/>
            <person name="Darling A.E."/>
            <person name="Facciotti M.T."/>
        </authorList>
    </citation>
    <scope>NUCLEOTIDE SEQUENCE [LARGE SCALE GENOMIC DNA]</scope>
    <source>
        <strain>ATCC 29605 / DSM 3757 / JCM 8879 / NBRC 14742 / NCIMB 2012 / VKM B-1768 / DS2</strain>
    </source>
</reference>
<reference key="3">
    <citation type="journal article" date="2023" name="Front. Microbiol.">
        <title>Characterization of the zinc finger mu-protein HVO_0758 from Haloferax volcanii: biological roles, zinc binding, and NMR solution structure.</title>
        <authorList>
            <person name="Ueresin D."/>
            <person name="Pyper D.J."/>
            <person name="Borst A."/>
            <person name="Hadjeras L."/>
            <person name="Gelhausen R."/>
            <person name="Backofen R."/>
            <person name="Sharma C."/>
            <person name="Schwalbe H."/>
            <person name="Soppa J."/>
        </authorList>
    </citation>
    <scope>DISRUPTION PHENOTYPE</scope>
    <source>
        <strain>DS2 / DS70 / H26</strain>
    </source>
</reference>
<reference evidence="8" key="4">
    <citation type="journal article" date="2021" name="FEBS J.">
        <title>Biological functions, genetic and biochemical characterization, and NMR structure determination of the small zinc finger protein HVO_2753 from Haloferax volcanii.</title>
        <authorList>
            <person name="Zahn S."/>
            <person name="Kubatova N."/>
            <person name="Pyper D.J."/>
            <person name="Cassidy L."/>
            <person name="Saxena K."/>
            <person name="Tholey A."/>
            <person name="Schwalbe H."/>
            <person name="Soppa J."/>
        </authorList>
    </citation>
    <scope>STRUCTURE BY NMR OF 2-59</scope>
    <scope>FUNCTION</scope>
    <scope>SUBUNIT</scope>
    <scope>DISRUPTION PHENOTYPE</scope>
    <scope>MUTAGENESIS OF CYS-12; CYS-29; GLN-34; CYS-39; TYR-49 AND CYS-51</scope>
    <scope>PHYLOGENETIC ANALYSIS</scope>
    <scope>DOMAIN</scope>
    <source>
        <strain>DS2 / DS70 / H26</strain>
    </source>
</reference>
<proteinExistence type="evidence at protein level"/>
<evidence type="ECO:0000269" key="1">
    <source>
    </source>
</evidence>
<evidence type="ECO:0000269" key="2">
    <source>
    </source>
</evidence>
<evidence type="ECO:0000303" key="3">
    <source>
    </source>
</evidence>
<evidence type="ECO:0000305" key="4">
    <source>
    </source>
</evidence>
<evidence type="ECO:0000312" key="5">
    <source>
        <dbReference type="EMBL" id="ADE04009.1"/>
    </source>
</evidence>
<evidence type="ECO:0000312" key="6">
    <source>
        <dbReference type="EMBL" id="ELY32345.1"/>
    </source>
</evidence>
<evidence type="ECO:0000312" key="7">
    <source>
        <dbReference type="Proteomes" id="UP000008243"/>
    </source>
</evidence>
<evidence type="ECO:0007744" key="8">
    <source>
        <dbReference type="PDB" id="6YDH"/>
    </source>
</evidence>
<evidence type="ECO:0007829" key="9">
    <source>
        <dbReference type="PDB" id="6YDH"/>
    </source>
</evidence>
<feature type="chain" id="PRO_0000454761" description="Zinc finger protein HVO_2753">
    <location>
        <begin position="1"/>
        <end position="59"/>
    </location>
</feature>
<feature type="short sequence motif" description="C(P)XCG motif 1" evidence="4">
    <location>
        <begin position="12"/>
        <end position="16"/>
    </location>
</feature>
<feature type="short sequence motif" description="C(P)XCG motif 2" evidence="4">
    <location>
        <begin position="29"/>
        <end position="33"/>
    </location>
</feature>
<feature type="short sequence motif" description="C(P)XCG motif 3" evidence="4">
    <location>
        <begin position="39"/>
        <end position="43"/>
    </location>
</feature>
<feature type="short sequence motif" description="C(P)XCG motif 4" evidence="4">
    <location>
        <begin position="51"/>
        <end position="55"/>
    </location>
</feature>
<feature type="binding site" evidence="4">
    <location>
        <position position="29"/>
    </location>
    <ligand>
        <name>Zn(2+)</name>
        <dbReference type="ChEBI" id="CHEBI:29105"/>
    </ligand>
</feature>
<feature type="binding site" evidence="4">
    <location>
        <position position="32"/>
    </location>
    <ligand>
        <name>Zn(2+)</name>
        <dbReference type="ChEBI" id="CHEBI:29105"/>
    </ligand>
</feature>
<feature type="binding site" evidence="4">
    <location>
        <position position="51"/>
    </location>
    <ligand>
        <name>Zn(2+)</name>
        <dbReference type="ChEBI" id="CHEBI:29105"/>
    </ligand>
</feature>
<feature type="binding site" evidence="4">
    <location>
        <position position="54"/>
    </location>
    <ligand>
        <name>Zn(2+)</name>
        <dbReference type="ChEBI" id="CHEBI:29105"/>
    </ligand>
</feature>
<feature type="mutagenesis site" description="Not able to complement the deletion mutant of this gene. Loss of swarming. Severe loss of structure and stability." evidence="1">
    <original>C</original>
    <variation>A</variation>
    <location>
        <position position="12"/>
    </location>
</feature>
<feature type="mutagenesis site" description="Not able to complement the deletion mutant of this gene. Loss of swarming. Severe loss of structure and stability." evidence="1">
    <original>C</original>
    <variation>A</variation>
    <location>
        <position position="29"/>
    </location>
</feature>
<feature type="mutagenesis site" description="Not able to complement the deletion mutant of this gene. Loss of swarming. Severe loss of structure and stability." evidence="1">
    <original>Q</original>
    <variation>A</variation>
    <location>
        <position position="34"/>
    </location>
</feature>
<feature type="mutagenesis site" description="Not able to complement the deletion mutant of this gene. Loss of swarming. Severe loss of structure and stability." evidence="1">
    <original>C</original>
    <variation>A</variation>
    <location>
        <position position="39"/>
    </location>
</feature>
<feature type="mutagenesis site" description="Not able to complement the deletion mutant of this gene. Loss of swarming. Severe loss of structure and stability." evidence="1">
    <original>Y</original>
    <variation>F</variation>
    <location>
        <position position="49"/>
    </location>
</feature>
<feature type="mutagenesis site" description="Not able to complement the deletion mutant of this gene. Loss of swarming. Severe loss of structure and stability." evidence="1">
    <original>C</original>
    <variation>A</variation>
    <location>
        <position position="51"/>
    </location>
</feature>
<feature type="strand" evidence="9">
    <location>
        <begin position="13"/>
        <end position="15"/>
    </location>
</feature>
<feature type="strand" evidence="9">
    <location>
        <begin position="22"/>
        <end position="28"/>
    </location>
</feature>
<feature type="strand" evidence="9">
    <location>
        <begin position="30"/>
        <end position="32"/>
    </location>
</feature>
<feature type="strand" evidence="9">
    <location>
        <begin position="35"/>
        <end position="38"/>
    </location>
</feature>
<feature type="helix" evidence="9">
    <location>
        <begin position="42"/>
        <end position="45"/>
    </location>
</feature>
<feature type="strand" evidence="9">
    <location>
        <begin position="48"/>
        <end position="51"/>
    </location>
</feature>
<feature type="turn" evidence="9">
    <location>
        <begin position="52"/>
        <end position="55"/>
    </location>
</feature>
<feature type="strand" evidence="9">
    <location>
        <begin position="56"/>
        <end position="58"/>
    </location>
</feature>
<sequence>MSESEQRHAHQCVSCGINIAGMSAATFKCPDCGQEISRCSKCRKQSNLYECPDCGFMGP</sequence>
<protein>
    <recommendedName>
        <fullName evidence="3">Zinc finger protein HVO_2753</fullName>
    </recommendedName>
    <alternativeName>
        <fullName evidence="5">Small CPxCG-related zinc finger protein</fullName>
    </alternativeName>
    <alternativeName>
        <fullName evidence="3">Zinc finger mu-protein HVO_2753</fullName>
    </alternativeName>
    <alternativeName>
        <fullName evidence="6">Zn-ribbon RNA-binding protein</fullName>
    </alternativeName>
</protein>
<comment type="function">
    <text evidence="1">Zinc-binding protein that binds only one zinc ion. Is required for swarming and biofilm formation.</text>
</comment>
<comment type="subunit">
    <text evidence="1">Monomer in solution.</text>
</comment>
<comment type="domain">
    <text evidence="1">Contains four C(P)XCG motifs, suggesting the presence of two zinc binding pockets (ZBPs), but only ZBP2 (comprised of C(P)XCG motifs 2 and 4) is occupied by zinc. All four C(P)XCG motifs are essential for protein stability, folding, and functionality.</text>
</comment>
<comment type="disruption phenotype">
    <text evidence="1 2">Cells lacking this gene grow as the wild-type in complex medium and in synthetic medium with glucose as sole carbon and energy source, but the mutant cells are not capable of swarming and have severe defects in forming biofilms (PubMed:32905660). In this mutant many motility and chemotaxis genes are down-regulated, and several genes likely involved in sugar import, sugar metabolism and glycoprotein production are up-regulated (PubMed:38094630).</text>
</comment>
<keyword id="KW-0002">3D-structure</keyword>
<keyword id="KW-0479">Metal-binding</keyword>
<keyword id="KW-1185">Reference proteome</keyword>
<keyword id="KW-0862">Zinc</keyword>
<keyword id="KW-0863">Zinc-finger</keyword>
<name>Z2753_HALVD</name>
<organism evidence="5">
    <name type="scientific">Haloferax volcanii (strain ATCC 29605 / DSM 3757 / JCM 8879 / NBRC 14742 / NCIMB 2012 / VKM B-1768 / DS2)</name>
    <name type="common">Halobacterium volcanii</name>
    <dbReference type="NCBI Taxonomy" id="309800"/>
    <lineage>
        <taxon>Archaea</taxon>
        <taxon>Methanobacteriati</taxon>
        <taxon>Methanobacteriota</taxon>
        <taxon>Stenosarchaea group</taxon>
        <taxon>Halobacteria</taxon>
        <taxon>Halobacteriales</taxon>
        <taxon>Haloferacaceae</taxon>
        <taxon>Haloferax</taxon>
    </lineage>
</organism>
<accession>D4GWB3</accession>
<accession>A0A384LLU8</accession>
<accession>L9V568</accession>
<dbReference type="EMBL" id="CP001956">
    <property type="protein sequence ID" value="ADE04009.1"/>
    <property type="molecule type" value="Genomic_DNA"/>
</dbReference>
<dbReference type="EMBL" id="AOHU01000047">
    <property type="protein sequence ID" value="ELY32345.1"/>
    <property type="molecule type" value="Genomic_DNA"/>
</dbReference>
<dbReference type="RefSeq" id="WP_004042997.1">
    <property type="nucleotide sequence ID" value="NZ_AOHU01000047.1"/>
</dbReference>
<dbReference type="PDB" id="6YDH">
    <property type="method" value="NMR"/>
    <property type="chains" value="A=2-59"/>
</dbReference>
<dbReference type="PDBsum" id="6YDH"/>
<dbReference type="SMR" id="D4GWB3"/>
<dbReference type="STRING" id="309800.HVO_2753"/>
<dbReference type="PaxDb" id="309800-C498_09054"/>
<dbReference type="EnsemblBacteria" id="ADE04009">
    <property type="protein sequence ID" value="ADE04009"/>
    <property type="gene ID" value="HVO_2753"/>
</dbReference>
<dbReference type="KEGG" id="hvo:HVO_2753"/>
<dbReference type="PATRIC" id="fig|309800.29.peg.1774"/>
<dbReference type="eggNOG" id="arCOG01989">
    <property type="taxonomic scope" value="Archaea"/>
</dbReference>
<dbReference type="HOGENOM" id="CLU_196471_0_0_2"/>
<dbReference type="OrthoDB" id="35104at2157"/>
<dbReference type="Proteomes" id="UP000008243">
    <property type="component" value="Chromosome"/>
</dbReference>
<dbReference type="Proteomes" id="UP000011532">
    <property type="component" value="Unassembled WGS sequence"/>
</dbReference>
<dbReference type="GO" id="GO:0008270">
    <property type="term" value="F:zinc ion binding"/>
    <property type="evidence" value="ECO:0000314"/>
    <property type="project" value="UniProtKB"/>
</dbReference>
<dbReference type="GO" id="GO:0097590">
    <property type="term" value="P:archaeal-type flagellum-dependent cell motility"/>
    <property type="evidence" value="ECO:0000315"/>
    <property type="project" value="UniProtKB"/>
</dbReference>
<dbReference type="GO" id="GO:0090606">
    <property type="term" value="P:single-species surface biofilm formation"/>
    <property type="evidence" value="ECO:0000315"/>
    <property type="project" value="UniProtKB"/>
</dbReference>
<dbReference type="InterPro" id="IPR044720">
    <property type="entry name" value="HVO_2753-like"/>
</dbReference>
<dbReference type="InterPro" id="IPR049683">
    <property type="entry name" value="HVO_2753-like_euryarch"/>
</dbReference>
<dbReference type="InterPro" id="IPR011668">
    <property type="entry name" value="HVO_2753-like_ZBP"/>
</dbReference>
<dbReference type="NCBIfam" id="NF041909">
    <property type="entry name" value="HVO_2753"/>
    <property type="match status" value="1"/>
</dbReference>
<dbReference type="NCBIfam" id="NF011481">
    <property type="entry name" value="PRK14890.1"/>
    <property type="match status" value="1"/>
</dbReference>
<dbReference type="PANTHER" id="PTHR40733:SF1">
    <property type="entry name" value="SMALL ZINC FINGER PROTEIN HVO-2753-LIKE ZINC-BINDING POCKET DOMAIN-CONTAINING PROTEIN"/>
    <property type="match status" value="1"/>
</dbReference>
<dbReference type="PANTHER" id="PTHR40733">
    <property type="entry name" value="ZINC-RIBBON RNA-BINDING PROTEIN INVOLVED IN TRANSLATION-RELATED"/>
    <property type="match status" value="1"/>
</dbReference>
<dbReference type="Pfam" id="PF07754">
    <property type="entry name" value="HVO_2753_ZBP"/>
    <property type="match status" value="1"/>
</dbReference>
<gene>
    <name evidence="5" type="ordered locus">HVO_2753</name>
    <name evidence="6" type="ORF">C498_09054</name>
</gene>